<name>MNMC_LEPIC</name>
<feature type="chain" id="PRO_0000347997" description="tRNA 5-methylaminomethyl-2-thiouridine biosynthesis bifunctional protein MnmC">
    <location>
        <begin position="1"/>
        <end position="647"/>
    </location>
</feature>
<feature type="region of interest" description="tRNA (mnm(5)s(2)U34)-methyltransferase">
    <location>
        <begin position="1"/>
        <end position="227"/>
    </location>
</feature>
<feature type="region of interest" description="FAD-dependent cmnm(5)s(2)U34 oxidoreductase">
    <location>
        <begin position="256"/>
        <end position="647"/>
    </location>
</feature>
<dbReference type="EC" id="2.1.1.61" evidence="1"/>
<dbReference type="EC" id="1.5.-.-" evidence="1"/>
<dbReference type="EMBL" id="AE016823">
    <property type="protein sequence ID" value="AAS69269.1"/>
    <property type="molecule type" value="Genomic_DNA"/>
</dbReference>
<dbReference type="RefSeq" id="WP_000958883.1">
    <property type="nucleotide sequence ID" value="NC_005823.1"/>
</dbReference>
<dbReference type="SMR" id="Q72UK9"/>
<dbReference type="GeneID" id="61143992"/>
<dbReference type="KEGG" id="lic:LIC_10648"/>
<dbReference type="HOGENOM" id="CLU_022427_1_0_12"/>
<dbReference type="Proteomes" id="UP000007037">
    <property type="component" value="Chromosome I"/>
</dbReference>
<dbReference type="GO" id="GO:0005737">
    <property type="term" value="C:cytoplasm"/>
    <property type="evidence" value="ECO:0007669"/>
    <property type="project" value="UniProtKB-SubCell"/>
</dbReference>
<dbReference type="GO" id="GO:0050660">
    <property type="term" value="F:flavin adenine dinucleotide binding"/>
    <property type="evidence" value="ECO:0007669"/>
    <property type="project" value="UniProtKB-UniRule"/>
</dbReference>
<dbReference type="GO" id="GO:0016645">
    <property type="term" value="F:oxidoreductase activity, acting on the CH-NH group of donors"/>
    <property type="evidence" value="ECO:0007669"/>
    <property type="project" value="InterPro"/>
</dbReference>
<dbReference type="GO" id="GO:0004808">
    <property type="term" value="F:tRNA (5-methylaminomethyl-2-thiouridylate)(34)-methyltransferase activity"/>
    <property type="evidence" value="ECO:0007669"/>
    <property type="project" value="UniProtKB-EC"/>
</dbReference>
<dbReference type="GO" id="GO:0032259">
    <property type="term" value="P:methylation"/>
    <property type="evidence" value="ECO:0007669"/>
    <property type="project" value="UniProtKB-KW"/>
</dbReference>
<dbReference type="GO" id="GO:0002097">
    <property type="term" value="P:tRNA wobble base modification"/>
    <property type="evidence" value="ECO:0007669"/>
    <property type="project" value="UniProtKB-UniRule"/>
</dbReference>
<dbReference type="Gene3D" id="3.30.9.10">
    <property type="entry name" value="D-Amino Acid Oxidase, subunit A, domain 2"/>
    <property type="match status" value="1"/>
</dbReference>
<dbReference type="Gene3D" id="3.50.50.60">
    <property type="entry name" value="FAD/NAD(P)-binding domain"/>
    <property type="match status" value="1"/>
</dbReference>
<dbReference type="Gene3D" id="3.40.50.150">
    <property type="entry name" value="Vaccinia Virus protein VP39"/>
    <property type="match status" value="1"/>
</dbReference>
<dbReference type="HAMAP" id="MF_01102">
    <property type="entry name" value="MnmC"/>
    <property type="match status" value="1"/>
</dbReference>
<dbReference type="InterPro" id="IPR006076">
    <property type="entry name" value="FAD-dep_OxRdtase"/>
</dbReference>
<dbReference type="InterPro" id="IPR036188">
    <property type="entry name" value="FAD/NAD-bd_sf"/>
</dbReference>
<dbReference type="InterPro" id="IPR008471">
    <property type="entry name" value="MnmC-like_methylTransf"/>
</dbReference>
<dbReference type="InterPro" id="IPR029063">
    <property type="entry name" value="SAM-dependent_MTases_sf"/>
</dbReference>
<dbReference type="InterPro" id="IPR023032">
    <property type="entry name" value="tRNA_MAMT_biosynth_bifunc_MnmC"/>
</dbReference>
<dbReference type="InterPro" id="IPR047785">
    <property type="entry name" value="tRNA_MNMC2"/>
</dbReference>
<dbReference type="InterPro" id="IPR017610">
    <property type="entry name" value="tRNA_S-uridine_synth_MnmC_C"/>
</dbReference>
<dbReference type="NCBIfam" id="TIGR03197">
    <property type="entry name" value="MnmC_Cterm"/>
    <property type="match status" value="1"/>
</dbReference>
<dbReference type="NCBIfam" id="NF002481">
    <property type="entry name" value="PRK01747.1-2"/>
    <property type="match status" value="1"/>
</dbReference>
<dbReference type="NCBIfam" id="NF033855">
    <property type="entry name" value="tRNA_MNMC2"/>
    <property type="match status" value="1"/>
</dbReference>
<dbReference type="PANTHER" id="PTHR13847">
    <property type="entry name" value="SARCOSINE DEHYDROGENASE-RELATED"/>
    <property type="match status" value="1"/>
</dbReference>
<dbReference type="PANTHER" id="PTHR13847:SF283">
    <property type="entry name" value="TRNA 5-METHYLAMINOMETHYL-2-THIOURIDINE BIOSYNTHESIS BIFUNCTIONAL PROTEIN MNMC"/>
    <property type="match status" value="1"/>
</dbReference>
<dbReference type="Pfam" id="PF01266">
    <property type="entry name" value="DAO"/>
    <property type="match status" value="1"/>
</dbReference>
<dbReference type="Pfam" id="PF05430">
    <property type="entry name" value="Methyltransf_30"/>
    <property type="match status" value="1"/>
</dbReference>
<dbReference type="SUPFAM" id="SSF54373">
    <property type="entry name" value="FAD-linked reductases, C-terminal domain"/>
    <property type="match status" value="1"/>
</dbReference>
<dbReference type="SUPFAM" id="SSF51905">
    <property type="entry name" value="FAD/NAD(P)-binding domain"/>
    <property type="match status" value="1"/>
</dbReference>
<evidence type="ECO:0000255" key="1">
    <source>
        <dbReference type="HAMAP-Rule" id="MF_01102"/>
    </source>
</evidence>
<accession>Q72UK9</accession>
<protein>
    <recommendedName>
        <fullName evidence="1">tRNA 5-methylaminomethyl-2-thiouridine biosynthesis bifunctional protein MnmC</fullName>
        <shortName evidence="1">tRNA mnm(5)s(2)U biosynthesis bifunctional protein</shortName>
    </recommendedName>
    <domain>
        <recommendedName>
            <fullName evidence="1">tRNA (mnm(5)s(2)U34)-methyltransferase</fullName>
            <ecNumber evidence="1">2.1.1.61</ecNumber>
        </recommendedName>
    </domain>
    <domain>
        <recommendedName>
            <fullName evidence="1">FAD-dependent cmnm(5)s(2)U34 oxidoreductase</fullName>
            <ecNumber evidence="1">1.5.-.-</ecNumber>
        </recommendedName>
    </domain>
</protein>
<gene>
    <name evidence="1" type="primary">mnmC</name>
    <name type="ordered locus">LIC_10648</name>
</gene>
<proteinExistence type="inferred from homology"/>
<reference key="1">
    <citation type="journal article" date="2004" name="J. Bacteriol.">
        <title>Comparative genomics of two Leptospira interrogans serovars reveals novel insights into physiology and pathogenesis.</title>
        <authorList>
            <person name="Nascimento A.L.T.O."/>
            <person name="Ko A.I."/>
            <person name="Martins E.A.L."/>
            <person name="Monteiro-Vitorello C.B."/>
            <person name="Ho P.L."/>
            <person name="Haake D.A."/>
            <person name="Verjovski-Almeida S."/>
            <person name="Hartskeerl R.A."/>
            <person name="Marques M.V."/>
            <person name="Oliveira M.C."/>
            <person name="Menck C.F.M."/>
            <person name="Leite L.C.C."/>
            <person name="Carrer H."/>
            <person name="Coutinho L.L."/>
            <person name="Degrave W.M."/>
            <person name="Dellagostin O.A."/>
            <person name="El-Dorry H."/>
            <person name="Ferro E.S."/>
            <person name="Ferro M.I.T."/>
            <person name="Furlan L.R."/>
            <person name="Gamberini M."/>
            <person name="Giglioti E.A."/>
            <person name="Goes-Neto A."/>
            <person name="Goldman G.H."/>
            <person name="Goldman M.H.S."/>
            <person name="Harakava R."/>
            <person name="Jeronimo S.M.B."/>
            <person name="Junqueira-de-Azevedo I.L.M."/>
            <person name="Kimura E.T."/>
            <person name="Kuramae E.E."/>
            <person name="Lemos E.G.M."/>
            <person name="Lemos M.V.F."/>
            <person name="Marino C.L."/>
            <person name="Nunes L.R."/>
            <person name="de Oliveira R.C."/>
            <person name="Pereira G.G."/>
            <person name="Reis M.S."/>
            <person name="Schriefer A."/>
            <person name="Siqueira W.J."/>
            <person name="Sommer P."/>
            <person name="Tsai S.M."/>
            <person name="Simpson A.J.G."/>
            <person name="Ferro J.A."/>
            <person name="Camargo L.E.A."/>
            <person name="Kitajima J.P."/>
            <person name="Setubal J.C."/>
            <person name="Van Sluys M.A."/>
        </authorList>
    </citation>
    <scope>NUCLEOTIDE SEQUENCE [LARGE SCALE GENOMIC DNA]</scope>
    <source>
        <strain>Fiocruz L1-130</strain>
    </source>
</reference>
<keyword id="KW-0963">Cytoplasm</keyword>
<keyword id="KW-0274">FAD</keyword>
<keyword id="KW-0285">Flavoprotein</keyword>
<keyword id="KW-0489">Methyltransferase</keyword>
<keyword id="KW-0511">Multifunctional enzyme</keyword>
<keyword id="KW-0560">Oxidoreductase</keyword>
<keyword id="KW-0949">S-adenosyl-L-methionine</keyword>
<keyword id="KW-0808">Transferase</keyword>
<keyword id="KW-0819">tRNA processing</keyword>
<comment type="function">
    <text evidence="1">Catalyzes the last two steps in the biosynthesis of 5-methylaminomethyl-2-thiouridine (mnm(5)s(2)U) at the wobble position (U34) in tRNA. Catalyzes the FAD-dependent demodification of cmnm(5)s(2)U34 to nm(5)s(2)U34, followed by the transfer of a methyl group from S-adenosyl-L-methionine to nm(5)s(2)U34, to form mnm(5)s(2)U34.</text>
</comment>
<comment type="catalytic activity">
    <reaction evidence="1">
        <text>5-aminomethyl-2-thiouridine(34) in tRNA + S-adenosyl-L-methionine = 5-methylaminomethyl-2-thiouridine(34) in tRNA + S-adenosyl-L-homocysteine + H(+)</text>
        <dbReference type="Rhea" id="RHEA:19569"/>
        <dbReference type="Rhea" id="RHEA-COMP:10195"/>
        <dbReference type="Rhea" id="RHEA-COMP:10197"/>
        <dbReference type="ChEBI" id="CHEBI:15378"/>
        <dbReference type="ChEBI" id="CHEBI:57856"/>
        <dbReference type="ChEBI" id="CHEBI:59789"/>
        <dbReference type="ChEBI" id="CHEBI:74454"/>
        <dbReference type="ChEBI" id="CHEBI:74455"/>
        <dbReference type="EC" id="2.1.1.61"/>
    </reaction>
</comment>
<comment type="cofactor">
    <cofactor evidence="1">
        <name>FAD</name>
        <dbReference type="ChEBI" id="CHEBI:57692"/>
    </cofactor>
</comment>
<comment type="subcellular location">
    <subcellularLocation>
        <location evidence="1">Cytoplasm</location>
    </subcellularLocation>
</comment>
<comment type="similarity">
    <text evidence="1">In the N-terminal section; belongs to the methyltransferase superfamily. tRNA (mnm(5)s(2)U34)-methyltransferase family.</text>
</comment>
<comment type="similarity">
    <text evidence="1">In the C-terminal section; belongs to the DAO family.</text>
</comment>
<sequence>MLTWKNNLTPVSEQFDDIYFSPENGLEETKHVFIKGNDLYNRWRNWNIQNAFCILELGFGTGLNFLTTWKEYLEYKDRFRLHFISIEKFPLNREEISKALSIFSELVEIKKEFLSSYQDLIPGMNYFQFLGGKIHFSLFLGDVSSALCEISGKVDAIFLDGFAPSKNPEMWDKSVLENLKYVSKKGTTLSTFTVARMVRDSLSFSGFKLEKRPGFGRKREMLIGSYSDSFLESNPKEKPWCKRAYPELQIKTVAIVGAGIAGTTLAYSLSRRGIQVFLIDPSGIAKETSGIPMAISHPHLTKIPGPISLFTLRAFRYALSFLSSFADQNFFEKTGLFHSVTQEMDSERLQKGIENHKLSEEIVFWKPIASKFQNGDFLENEPGVFFRNGFWTRPESIAKKCAEQPGVEFIKGTASRIEQDGTSWKLLIQESGHEIVANSIIFCNSHSIGKLIASLFEGEEPFPIRKVRGQLISLKETEKSSRISNILCAEHYLTPSILGEHILGSTFDEFDLNPLPQKKDTDRLLEFVQNKYPSLNFDSSCVLIEKVGLRAQTPDRLPILGPVFDPREFRKIYKEIDLPKNRNKKFPNLKTIQGLYVFGGLGSRGILSSFLGSEIMASLILGEPVPVESSVLEYLHPARFLYRKVRK</sequence>
<organism>
    <name type="scientific">Leptospira interrogans serogroup Icterohaemorrhagiae serovar copenhageni (strain Fiocruz L1-130)</name>
    <dbReference type="NCBI Taxonomy" id="267671"/>
    <lineage>
        <taxon>Bacteria</taxon>
        <taxon>Pseudomonadati</taxon>
        <taxon>Spirochaetota</taxon>
        <taxon>Spirochaetia</taxon>
        <taxon>Leptospirales</taxon>
        <taxon>Leptospiraceae</taxon>
        <taxon>Leptospira</taxon>
    </lineage>
</organism>